<comment type="function">
    <text evidence="1">Catalyzes the methylthiolation of N6-(dimethylallyl)adenosine (i(6)A), leading to the formation of 2-methylthio-N6-(dimethylallyl)adenosine (ms(2)i(6)A) at position 37 in tRNAs that read codons beginning with uridine.</text>
</comment>
<comment type="catalytic activity">
    <reaction evidence="1">
        <text>N(6)-dimethylallyladenosine(37) in tRNA + (sulfur carrier)-SH + AH2 + 2 S-adenosyl-L-methionine = 2-methylsulfanyl-N(6)-dimethylallyladenosine(37) in tRNA + (sulfur carrier)-H + 5'-deoxyadenosine + L-methionine + A + S-adenosyl-L-homocysteine + 2 H(+)</text>
        <dbReference type="Rhea" id="RHEA:37067"/>
        <dbReference type="Rhea" id="RHEA-COMP:10375"/>
        <dbReference type="Rhea" id="RHEA-COMP:10376"/>
        <dbReference type="Rhea" id="RHEA-COMP:14737"/>
        <dbReference type="Rhea" id="RHEA-COMP:14739"/>
        <dbReference type="ChEBI" id="CHEBI:13193"/>
        <dbReference type="ChEBI" id="CHEBI:15378"/>
        <dbReference type="ChEBI" id="CHEBI:17319"/>
        <dbReference type="ChEBI" id="CHEBI:17499"/>
        <dbReference type="ChEBI" id="CHEBI:29917"/>
        <dbReference type="ChEBI" id="CHEBI:57844"/>
        <dbReference type="ChEBI" id="CHEBI:57856"/>
        <dbReference type="ChEBI" id="CHEBI:59789"/>
        <dbReference type="ChEBI" id="CHEBI:64428"/>
        <dbReference type="ChEBI" id="CHEBI:74415"/>
        <dbReference type="ChEBI" id="CHEBI:74417"/>
        <dbReference type="EC" id="2.8.4.3"/>
    </reaction>
</comment>
<comment type="cofactor">
    <cofactor evidence="1">
        <name>[4Fe-4S] cluster</name>
        <dbReference type="ChEBI" id="CHEBI:49883"/>
    </cofactor>
    <text evidence="1">Binds 2 [4Fe-4S] clusters. One cluster is coordinated with 3 cysteines and an exchangeable S-adenosyl-L-methionine.</text>
</comment>
<comment type="subunit">
    <text evidence="1">Monomer.</text>
</comment>
<comment type="subcellular location">
    <subcellularLocation>
        <location evidence="1">Cytoplasm</location>
    </subcellularLocation>
</comment>
<comment type="similarity">
    <text evidence="1">Belongs to the methylthiotransferase family. MiaB subfamily.</text>
</comment>
<comment type="sequence caution" evidence="3">
    <conflict type="erroneous initiation">
        <sequence resource="EMBL-CDS" id="ABX42960"/>
    </conflict>
</comment>
<evidence type="ECO:0000255" key="1">
    <source>
        <dbReference type="HAMAP-Rule" id="MF_01864"/>
    </source>
</evidence>
<evidence type="ECO:0000255" key="2">
    <source>
        <dbReference type="PROSITE-ProRule" id="PRU01266"/>
    </source>
</evidence>
<evidence type="ECO:0000305" key="3"/>
<organism>
    <name type="scientific">Lachnoclostridium phytofermentans (strain ATCC 700394 / DSM 18823 / ISDg)</name>
    <name type="common">Clostridium phytofermentans</name>
    <dbReference type="NCBI Taxonomy" id="357809"/>
    <lineage>
        <taxon>Bacteria</taxon>
        <taxon>Bacillati</taxon>
        <taxon>Bacillota</taxon>
        <taxon>Clostridia</taxon>
        <taxon>Lachnospirales</taxon>
        <taxon>Lachnospiraceae</taxon>
    </lineage>
</organism>
<proteinExistence type="inferred from homology"/>
<sequence length="456" mass="51963">MALCKAEVKKVADELGRPLTFNVQTFGCQMNAKDSEKLAGILETIGYVESDSEEADFVVYNTCTVRENANTRVYGRIGFLGNLKKKNPHMRIALCGCMMQESHVVEKIKKSYRFVDIVFGTHNIFKLAELIYARHTTKKMVIDIWKETDKIVEELPSEQKYKFKAGVNIMYGCNNFCSYCIVPYVRGRERSRNPEDIIKEIKQLVSKGVVEVMLLGQNVNSYGKTLDEPVSFAQLLQMVEQVEGLKRIRFMTPHPKDLSNDVIEVMKNSKKICNHIHLPVQSGSTELLMKMNRKYTKEDYLNLVDRIKMAMPNISLTTDIIVGFPGETEEDFLDTLDVVRKVGYDSAYTFIYSKRSGTPAATMENQIPEEVANERFQRLLTTIRESSSKISKDDEGKIAEVLVEEVNEQDNSLMTGRLSNNVLVHFKGTKELIGNIVSVKLSECKGFYYMGEMMED</sequence>
<reference key="1">
    <citation type="submission" date="2007-11" db="EMBL/GenBank/DDBJ databases">
        <title>Complete genome sequence of Clostridium phytofermentans ISDg.</title>
        <authorList>
            <person name="Leschine S.B."/>
            <person name="Warnick T.A."/>
            <person name="Blanchard J.L."/>
            <person name="Schnell D.J."/>
            <person name="Petit E.L."/>
            <person name="LaTouf W.G."/>
            <person name="Copeland A."/>
            <person name="Lucas S."/>
            <person name="Lapidus A."/>
            <person name="Barry K."/>
            <person name="Glavina del Rio T."/>
            <person name="Dalin E."/>
            <person name="Tice H."/>
            <person name="Pitluck S."/>
            <person name="Kiss H."/>
            <person name="Brettin T."/>
            <person name="Bruce D."/>
            <person name="Detter J.C."/>
            <person name="Han C."/>
            <person name="Kuske C."/>
            <person name="Schmutz J."/>
            <person name="Larimer F."/>
            <person name="Land M."/>
            <person name="Hauser L."/>
            <person name="Kyrpides N."/>
            <person name="Kim E.A."/>
            <person name="Richardson P."/>
        </authorList>
    </citation>
    <scope>NUCLEOTIDE SEQUENCE [LARGE SCALE GENOMIC DNA]</scope>
    <source>
        <strain>ATCC 700394 / DSM 18823 / ISDg</strain>
    </source>
</reference>
<accession>A9KMU9</accession>
<feature type="chain" id="PRO_0000374233" description="tRNA-2-methylthio-N(6)-dimethylallyladenosine synthase">
    <location>
        <begin position="1"/>
        <end position="456"/>
    </location>
</feature>
<feature type="domain" description="MTTase N-terminal" evidence="1">
    <location>
        <begin position="19"/>
        <end position="136"/>
    </location>
</feature>
<feature type="domain" description="Radical SAM core" evidence="2">
    <location>
        <begin position="159"/>
        <end position="389"/>
    </location>
</feature>
<feature type="domain" description="TRAM" evidence="1">
    <location>
        <begin position="392"/>
        <end position="455"/>
    </location>
</feature>
<feature type="binding site" evidence="1">
    <location>
        <position position="28"/>
    </location>
    <ligand>
        <name>[4Fe-4S] cluster</name>
        <dbReference type="ChEBI" id="CHEBI:49883"/>
        <label>1</label>
    </ligand>
</feature>
<feature type="binding site" evidence="1">
    <location>
        <position position="63"/>
    </location>
    <ligand>
        <name>[4Fe-4S] cluster</name>
        <dbReference type="ChEBI" id="CHEBI:49883"/>
        <label>1</label>
    </ligand>
</feature>
<feature type="binding site" evidence="1">
    <location>
        <position position="97"/>
    </location>
    <ligand>
        <name>[4Fe-4S] cluster</name>
        <dbReference type="ChEBI" id="CHEBI:49883"/>
        <label>1</label>
    </ligand>
</feature>
<feature type="binding site" evidence="1">
    <location>
        <position position="173"/>
    </location>
    <ligand>
        <name>[4Fe-4S] cluster</name>
        <dbReference type="ChEBI" id="CHEBI:49883"/>
        <label>2</label>
        <note>4Fe-4S-S-AdoMet</note>
    </ligand>
</feature>
<feature type="binding site" evidence="1">
    <location>
        <position position="177"/>
    </location>
    <ligand>
        <name>[4Fe-4S] cluster</name>
        <dbReference type="ChEBI" id="CHEBI:49883"/>
        <label>2</label>
        <note>4Fe-4S-S-AdoMet</note>
    </ligand>
</feature>
<feature type="binding site" evidence="1">
    <location>
        <position position="180"/>
    </location>
    <ligand>
        <name>[4Fe-4S] cluster</name>
        <dbReference type="ChEBI" id="CHEBI:49883"/>
        <label>2</label>
        <note>4Fe-4S-S-AdoMet</note>
    </ligand>
</feature>
<gene>
    <name evidence="1" type="primary">miaB</name>
    <name type="ordered locus">Cphy_2599</name>
</gene>
<name>MIAB_LACP7</name>
<protein>
    <recommendedName>
        <fullName evidence="1">tRNA-2-methylthio-N(6)-dimethylallyladenosine synthase</fullName>
        <ecNumber evidence="1">2.8.4.3</ecNumber>
    </recommendedName>
    <alternativeName>
        <fullName evidence="1">(Dimethylallyl)adenosine tRNA methylthiotransferase MiaB</fullName>
    </alternativeName>
    <alternativeName>
        <fullName evidence="1">tRNA-i(6)A37 methylthiotransferase</fullName>
    </alternativeName>
</protein>
<dbReference type="EC" id="2.8.4.3" evidence="1"/>
<dbReference type="EMBL" id="CP000885">
    <property type="protein sequence ID" value="ABX42960.1"/>
    <property type="status" value="ALT_INIT"/>
    <property type="molecule type" value="Genomic_DNA"/>
</dbReference>
<dbReference type="RefSeq" id="WP_012200612.1">
    <property type="nucleotide sequence ID" value="NC_010001.1"/>
</dbReference>
<dbReference type="SMR" id="A9KMU9"/>
<dbReference type="STRING" id="357809.Cphy_2599"/>
<dbReference type="KEGG" id="cpy:Cphy_2599"/>
<dbReference type="eggNOG" id="COG0621">
    <property type="taxonomic scope" value="Bacteria"/>
</dbReference>
<dbReference type="HOGENOM" id="CLU_018697_2_0_9"/>
<dbReference type="OrthoDB" id="9805215at2"/>
<dbReference type="Proteomes" id="UP000000370">
    <property type="component" value="Chromosome"/>
</dbReference>
<dbReference type="GO" id="GO:0005829">
    <property type="term" value="C:cytosol"/>
    <property type="evidence" value="ECO:0007669"/>
    <property type="project" value="TreeGrafter"/>
</dbReference>
<dbReference type="GO" id="GO:0051539">
    <property type="term" value="F:4 iron, 4 sulfur cluster binding"/>
    <property type="evidence" value="ECO:0007669"/>
    <property type="project" value="UniProtKB-UniRule"/>
</dbReference>
<dbReference type="GO" id="GO:0046872">
    <property type="term" value="F:metal ion binding"/>
    <property type="evidence" value="ECO:0007669"/>
    <property type="project" value="UniProtKB-KW"/>
</dbReference>
<dbReference type="GO" id="GO:0035597">
    <property type="term" value="F:N6-isopentenyladenosine methylthiotransferase activity"/>
    <property type="evidence" value="ECO:0007669"/>
    <property type="project" value="TreeGrafter"/>
</dbReference>
<dbReference type="CDD" id="cd01335">
    <property type="entry name" value="Radical_SAM"/>
    <property type="match status" value="1"/>
</dbReference>
<dbReference type="FunFam" id="3.40.50.12160:FF:000003">
    <property type="entry name" value="CDK5 regulatory subunit-associated protein 1"/>
    <property type="match status" value="1"/>
</dbReference>
<dbReference type="FunFam" id="3.80.30.20:FF:000001">
    <property type="entry name" value="tRNA-2-methylthio-N(6)-dimethylallyladenosine synthase 2"/>
    <property type="match status" value="1"/>
</dbReference>
<dbReference type="Gene3D" id="3.40.50.12160">
    <property type="entry name" value="Methylthiotransferase, N-terminal domain"/>
    <property type="match status" value="1"/>
</dbReference>
<dbReference type="Gene3D" id="3.80.30.20">
    <property type="entry name" value="tm_1862 like domain"/>
    <property type="match status" value="1"/>
</dbReference>
<dbReference type="HAMAP" id="MF_01864">
    <property type="entry name" value="tRNA_metthiotr_MiaB"/>
    <property type="match status" value="1"/>
</dbReference>
<dbReference type="InterPro" id="IPR006638">
    <property type="entry name" value="Elp3/MiaA/NifB-like_rSAM"/>
</dbReference>
<dbReference type="InterPro" id="IPR005839">
    <property type="entry name" value="Methylthiotransferase"/>
</dbReference>
<dbReference type="InterPro" id="IPR020612">
    <property type="entry name" value="Methylthiotransferase_CS"/>
</dbReference>
<dbReference type="InterPro" id="IPR013848">
    <property type="entry name" value="Methylthiotransferase_N"/>
</dbReference>
<dbReference type="InterPro" id="IPR038135">
    <property type="entry name" value="Methylthiotransferase_N_sf"/>
</dbReference>
<dbReference type="InterPro" id="IPR006463">
    <property type="entry name" value="MiaB_methiolase"/>
</dbReference>
<dbReference type="InterPro" id="IPR007197">
    <property type="entry name" value="rSAM"/>
</dbReference>
<dbReference type="InterPro" id="IPR023404">
    <property type="entry name" value="rSAM_horseshoe"/>
</dbReference>
<dbReference type="InterPro" id="IPR002792">
    <property type="entry name" value="TRAM_dom"/>
</dbReference>
<dbReference type="NCBIfam" id="TIGR01574">
    <property type="entry name" value="miaB-methiolase"/>
    <property type="match status" value="1"/>
</dbReference>
<dbReference type="NCBIfam" id="TIGR00089">
    <property type="entry name" value="MiaB/RimO family radical SAM methylthiotransferase"/>
    <property type="match status" value="1"/>
</dbReference>
<dbReference type="PANTHER" id="PTHR43020">
    <property type="entry name" value="CDK5 REGULATORY SUBUNIT-ASSOCIATED PROTEIN 1"/>
    <property type="match status" value="1"/>
</dbReference>
<dbReference type="PANTHER" id="PTHR43020:SF2">
    <property type="entry name" value="MITOCHONDRIAL TRNA METHYLTHIOTRANSFERASE CDK5RAP1"/>
    <property type="match status" value="1"/>
</dbReference>
<dbReference type="Pfam" id="PF04055">
    <property type="entry name" value="Radical_SAM"/>
    <property type="match status" value="1"/>
</dbReference>
<dbReference type="Pfam" id="PF01938">
    <property type="entry name" value="TRAM"/>
    <property type="match status" value="1"/>
</dbReference>
<dbReference type="Pfam" id="PF00919">
    <property type="entry name" value="UPF0004"/>
    <property type="match status" value="1"/>
</dbReference>
<dbReference type="SFLD" id="SFLDF00273">
    <property type="entry name" value="(dimethylallyl)adenosine_tRNA"/>
    <property type="match status" value="1"/>
</dbReference>
<dbReference type="SFLD" id="SFLDG01082">
    <property type="entry name" value="B12-binding_domain_containing"/>
    <property type="match status" value="1"/>
</dbReference>
<dbReference type="SFLD" id="SFLDG01061">
    <property type="entry name" value="methylthiotransferase"/>
    <property type="match status" value="1"/>
</dbReference>
<dbReference type="SMART" id="SM00729">
    <property type="entry name" value="Elp3"/>
    <property type="match status" value="1"/>
</dbReference>
<dbReference type="SUPFAM" id="SSF102114">
    <property type="entry name" value="Radical SAM enzymes"/>
    <property type="match status" value="1"/>
</dbReference>
<dbReference type="PROSITE" id="PS51449">
    <property type="entry name" value="MTTASE_N"/>
    <property type="match status" value="1"/>
</dbReference>
<dbReference type="PROSITE" id="PS01278">
    <property type="entry name" value="MTTASE_RADICAL"/>
    <property type="match status" value="1"/>
</dbReference>
<dbReference type="PROSITE" id="PS51918">
    <property type="entry name" value="RADICAL_SAM"/>
    <property type="match status" value="1"/>
</dbReference>
<dbReference type="PROSITE" id="PS50926">
    <property type="entry name" value="TRAM"/>
    <property type="match status" value="1"/>
</dbReference>
<keyword id="KW-0004">4Fe-4S</keyword>
<keyword id="KW-0963">Cytoplasm</keyword>
<keyword id="KW-0408">Iron</keyword>
<keyword id="KW-0411">Iron-sulfur</keyword>
<keyword id="KW-0479">Metal-binding</keyword>
<keyword id="KW-1185">Reference proteome</keyword>
<keyword id="KW-0949">S-adenosyl-L-methionine</keyword>
<keyword id="KW-0808">Transferase</keyword>
<keyword id="KW-0819">tRNA processing</keyword>